<evidence type="ECO:0000250" key="1">
    <source>
        <dbReference type="UniProtKB" id="Q9Y5T5"/>
    </source>
</evidence>
<evidence type="ECO:0000255" key="2">
    <source>
        <dbReference type="HAMAP-Rule" id="MF_03062"/>
    </source>
</evidence>
<evidence type="ECO:0000255" key="3">
    <source>
        <dbReference type="PROSITE-ProRule" id="PRU00502"/>
    </source>
</evidence>
<evidence type="ECO:0000256" key="4">
    <source>
        <dbReference type="SAM" id="MobiDB-lite"/>
    </source>
</evidence>
<evidence type="ECO:0000303" key="5">
    <source ref="1"/>
</evidence>
<evidence type="ECO:0000305" key="6"/>
<proteinExistence type="evidence at transcript level"/>
<organism>
    <name type="scientific">Macaca fascicularis</name>
    <name type="common">Crab-eating macaque</name>
    <name type="synonym">Cynomolgus monkey</name>
    <dbReference type="NCBI Taxonomy" id="9541"/>
    <lineage>
        <taxon>Eukaryota</taxon>
        <taxon>Metazoa</taxon>
        <taxon>Chordata</taxon>
        <taxon>Craniata</taxon>
        <taxon>Vertebrata</taxon>
        <taxon>Euteleostomi</taxon>
        <taxon>Mammalia</taxon>
        <taxon>Eutheria</taxon>
        <taxon>Euarchontoglires</taxon>
        <taxon>Primates</taxon>
        <taxon>Haplorrhini</taxon>
        <taxon>Catarrhini</taxon>
        <taxon>Cercopithecidae</taxon>
        <taxon>Cercopithecinae</taxon>
        <taxon>Macaca</taxon>
    </lineage>
</organism>
<protein>
    <recommendedName>
        <fullName evidence="2">Ubiquitin carboxyl-terminal hydrolase 16</fullName>
        <ecNumber evidence="2">3.4.19.12</ecNumber>
    </recommendedName>
    <alternativeName>
        <fullName evidence="2">Deubiquitinating enzyme 16</fullName>
    </alternativeName>
    <alternativeName>
        <fullName evidence="2">Ubiquitin thioesterase 16</fullName>
    </alternativeName>
    <alternativeName>
        <fullName evidence="2">Ubiquitin-specific-processing protease 16</fullName>
    </alternativeName>
</protein>
<dbReference type="EC" id="3.4.19.12" evidence="2"/>
<dbReference type="EMBL" id="AB169053">
    <property type="protein sequence ID" value="BAE01147.1"/>
    <property type="molecule type" value="mRNA"/>
</dbReference>
<dbReference type="EMBL" id="AB169216">
    <property type="protein sequence ID" value="BAE01308.1"/>
    <property type="status" value="ALT_FRAME"/>
    <property type="molecule type" value="mRNA"/>
</dbReference>
<dbReference type="BMRB" id="Q4R6X7"/>
<dbReference type="SMR" id="Q4R6X7"/>
<dbReference type="STRING" id="9541.ENSMFAP00000026358"/>
<dbReference type="eggNOG" id="KOG1873">
    <property type="taxonomic scope" value="Eukaryota"/>
</dbReference>
<dbReference type="Proteomes" id="UP000233100">
    <property type="component" value="Unplaced"/>
</dbReference>
<dbReference type="GO" id="GO:0005737">
    <property type="term" value="C:cytoplasm"/>
    <property type="evidence" value="ECO:0000250"/>
    <property type="project" value="UniProtKB"/>
</dbReference>
<dbReference type="GO" id="GO:0005829">
    <property type="term" value="C:cytosol"/>
    <property type="evidence" value="ECO:0007669"/>
    <property type="project" value="TreeGrafter"/>
</dbReference>
<dbReference type="GO" id="GO:0005634">
    <property type="term" value="C:nucleus"/>
    <property type="evidence" value="ECO:0000250"/>
    <property type="project" value="UniProtKB"/>
</dbReference>
<dbReference type="GO" id="GO:0004843">
    <property type="term" value="F:cysteine-type deubiquitinase activity"/>
    <property type="evidence" value="ECO:0000250"/>
    <property type="project" value="UniProtKB"/>
</dbReference>
<dbReference type="GO" id="GO:0004197">
    <property type="term" value="F:cysteine-type endopeptidase activity"/>
    <property type="evidence" value="ECO:0000250"/>
    <property type="project" value="UniProtKB"/>
</dbReference>
<dbReference type="GO" id="GO:0042393">
    <property type="term" value="F:histone binding"/>
    <property type="evidence" value="ECO:0000250"/>
    <property type="project" value="UniProtKB"/>
</dbReference>
<dbReference type="GO" id="GO:0140950">
    <property type="term" value="F:histone H2A deubiquitinase activity"/>
    <property type="evidence" value="ECO:0000250"/>
    <property type="project" value="UniProtKB"/>
</dbReference>
<dbReference type="GO" id="GO:0043024">
    <property type="term" value="F:ribosomal small subunit binding"/>
    <property type="evidence" value="ECO:0000250"/>
    <property type="project" value="UniProtKB"/>
</dbReference>
<dbReference type="GO" id="GO:0003713">
    <property type="term" value="F:transcription coactivator activity"/>
    <property type="evidence" value="ECO:0000250"/>
    <property type="project" value="UniProtKB"/>
</dbReference>
<dbReference type="GO" id="GO:0043130">
    <property type="term" value="F:ubiquitin binding"/>
    <property type="evidence" value="ECO:0000250"/>
    <property type="project" value="UniProtKB"/>
</dbReference>
<dbReference type="GO" id="GO:0008270">
    <property type="term" value="F:zinc ion binding"/>
    <property type="evidence" value="ECO:0000250"/>
    <property type="project" value="UniProtKB"/>
</dbReference>
<dbReference type="GO" id="GO:0051301">
    <property type="term" value="P:cell division"/>
    <property type="evidence" value="ECO:0007669"/>
    <property type="project" value="UniProtKB-KW"/>
</dbReference>
<dbReference type="GO" id="GO:0006974">
    <property type="term" value="P:DNA damage response"/>
    <property type="evidence" value="ECO:0000250"/>
    <property type="project" value="UniProtKB"/>
</dbReference>
<dbReference type="GO" id="GO:0140014">
    <property type="term" value="P:mitotic nuclear division"/>
    <property type="evidence" value="ECO:0007669"/>
    <property type="project" value="UniProtKB-UniRule"/>
</dbReference>
<dbReference type="GO" id="GO:0035520">
    <property type="term" value="P:monoubiquitinated protein deubiquitination"/>
    <property type="evidence" value="ECO:0000250"/>
    <property type="project" value="UniProtKB"/>
</dbReference>
<dbReference type="GO" id="GO:0045893">
    <property type="term" value="P:positive regulation of DNA-templated transcription"/>
    <property type="evidence" value="ECO:0000250"/>
    <property type="project" value="UniProtKB"/>
</dbReference>
<dbReference type="GO" id="GO:0090070">
    <property type="term" value="P:positive regulation of ribosome biogenesis"/>
    <property type="evidence" value="ECO:0000250"/>
    <property type="project" value="UniProtKB"/>
</dbReference>
<dbReference type="GO" id="GO:0045944">
    <property type="term" value="P:positive regulation of transcription by RNA polymerase II"/>
    <property type="evidence" value="ECO:0000250"/>
    <property type="project" value="UniProtKB"/>
</dbReference>
<dbReference type="GO" id="GO:0045901">
    <property type="term" value="P:positive regulation of translational elongation"/>
    <property type="evidence" value="ECO:0000250"/>
    <property type="project" value="UniProtKB"/>
</dbReference>
<dbReference type="GO" id="GO:0051289">
    <property type="term" value="P:protein homotetramerization"/>
    <property type="evidence" value="ECO:0000250"/>
    <property type="project" value="UniProtKB"/>
</dbReference>
<dbReference type="GO" id="GO:0006508">
    <property type="term" value="P:proteolysis"/>
    <property type="evidence" value="ECO:0007669"/>
    <property type="project" value="UniProtKB-KW"/>
</dbReference>
<dbReference type="GO" id="GO:0051726">
    <property type="term" value="P:regulation of cell cycle"/>
    <property type="evidence" value="ECO:0007669"/>
    <property type="project" value="InterPro"/>
</dbReference>
<dbReference type="GO" id="GO:0006357">
    <property type="term" value="P:regulation of transcription by RNA polymerase II"/>
    <property type="evidence" value="ECO:0000250"/>
    <property type="project" value="UniProtKB"/>
</dbReference>
<dbReference type="CDD" id="cd02667">
    <property type="entry name" value="Peptidase_C19K"/>
    <property type="match status" value="1"/>
</dbReference>
<dbReference type="FunFam" id="3.30.40.10:FF:000147">
    <property type="entry name" value="Ubiquitin carboxyl-terminal hydrolase 16"/>
    <property type="match status" value="1"/>
</dbReference>
<dbReference type="FunFam" id="3.90.70.10:FF:000045">
    <property type="entry name" value="Ubiquitin carboxyl-terminal hydrolase 16"/>
    <property type="match status" value="1"/>
</dbReference>
<dbReference type="FunFam" id="3.90.70.10:FF:000082">
    <property type="entry name" value="Ubiquitin carboxyl-terminal hydrolase 16"/>
    <property type="match status" value="1"/>
</dbReference>
<dbReference type="Gene3D" id="3.90.70.10">
    <property type="entry name" value="Cysteine proteinases"/>
    <property type="match status" value="2"/>
</dbReference>
<dbReference type="Gene3D" id="3.30.40.10">
    <property type="entry name" value="Zinc/RING finger domain, C3HC4 (zinc finger)"/>
    <property type="match status" value="1"/>
</dbReference>
<dbReference type="HAMAP" id="MF_03062">
    <property type="entry name" value="UBP16"/>
    <property type="match status" value="1"/>
</dbReference>
<dbReference type="InterPro" id="IPR038765">
    <property type="entry name" value="Papain-like_cys_pep_sf"/>
</dbReference>
<dbReference type="InterPro" id="IPR050164">
    <property type="entry name" value="Peptidase_C19"/>
</dbReference>
<dbReference type="InterPro" id="IPR001394">
    <property type="entry name" value="Peptidase_C19_UCH"/>
</dbReference>
<dbReference type="InterPro" id="IPR030849">
    <property type="entry name" value="UBP16"/>
</dbReference>
<dbReference type="InterPro" id="IPR018200">
    <property type="entry name" value="USP_CS"/>
</dbReference>
<dbReference type="InterPro" id="IPR028889">
    <property type="entry name" value="USP_dom"/>
</dbReference>
<dbReference type="InterPro" id="IPR013083">
    <property type="entry name" value="Znf_RING/FYVE/PHD"/>
</dbReference>
<dbReference type="InterPro" id="IPR001607">
    <property type="entry name" value="Znf_UBP"/>
</dbReference>
<dbReference type="PANTHER" id="PTHR24006">
    <property type="entry name" value="UBIQUITIN CARBOXYL-TERMINAL HYDROLASE"/>
    <property type="match status" value="1"/>
</dbReference>
<dbReference type="PANTHER" id="PTHR24006:SF852">
    <property type="entry name" value="UBIQUITIN CARBOXYL-TERMINAL HYDROLASE"/>
    <property type="match status" value="1"/>
</dbReference>
<dbReference type="Pfam" id="PF00443">
    <property type="entry name" value="UCH"/>
    <property type="match status" value="1"/>
</dbReference>
<dbReference type="Pfam" id="PF02148">
    <property type="entry name" value="zf-UBP"/>
    <property type="match status" value="1"/>
</dbReference>
<dbReference type="SMART" id="SM00290">
    <property type="entry name" value="ZnF_UBP"/>
    <property type="match status" value="1"/>
</dbReference>
<dbReference type="SUPFAM" id="SSF54001">
    <property type="entry name" value="Cysteine proteinases"/>
    <property type="match status" value="1"/>
</dbReference>
<dbReference type="SUPFAM" id="SSF57850">
    <property type="entry name" value="RING/U-box"/>
    <property type="match status" value="1"/>
</dbReference>
<dbReference type="PROSITE" id="PS00972">
    <property type="entry name" value="USP_1"/>
    <property type="match status" value="1"/>
</dbReference>
<dbReference type="PROSITE" id="PS00973">
    <property type="entry name" value="USP_2"/>
    <property type="match status" value="1"/>
</dbReference>
<dbReference type="PROSITE" id="PS50235">
    <property type="entry name" value="USP_3"/>
    <property type="match status" value="1"/>
</dbReference>
<dbReference type="PROSITE" id="PS50271">
    <property type="entry name" value="ZF_UBP"/>
    <property type="match status" value="1"/>
</dbReference>
<reference key="1">
    <citation type="submission" date="2005-06" db="EMBL/GenBank/DDBJ databases">
        <title>DNA sequences of macaque genes expressed in brain or testis and its evolutionary implications.</title>
        <authorList>
            <consortium name="International consortium for macaque cDNA sequencing and analysis"/>
        </authorList>
    </citation>
    <scope>NUCLEOTIDE SEQUENCE [LARGE SCALE MRNA] (ISOFORMS 1 AND 2)</scope>
    <source>
        <tissue>Testis</tissue>
    </source>
</reference>
<keyword id="KW-0010">Activator</keyword>
<keyword id="KW-0025">Alternative splicing</keyword>
<keyword id="KW-0131">Cell cycle</keyword>
<keyword id="KW-0132">Cell division</keyword>
<keyword id="KW-0156">Chromatin regulator</keyword>
<keyword id="KW-0378">Hydrolase</keyword>
<keyword id="KW-1017">Isopeptide bond</keyword>
<keyword id="KW-0479">Metal-binding</keyword>
<keyword id="KW-0498">Mitosis</keyword>
<keyword id="KW-0539">Nucleus</keyword>
<keyword id="KW-0597">Phosphoprotein</keyword>
<keyword id="KW-0645">Protease</keyword>
<keyword id="KW-1185">Reference proteome</keyword>
<keyword id="KW-0788">Thiol protease</keyword>
<keyword id="KW-0804">Transcription</keyword>
<keyword id="KW-0805">Transcription regulation</keyword>
<keyword id="KW-0832">Ubl conjugation</keyword>
<keyword id="KW-0833">Ubl conjugation pathway</keyword>
<keyword id="KW-0862">Zinc</keyword>
<keyword id="KW-0863">Zinc-finger</keyword>
<gene>
    <name evidence="2" type="primary">USP16</name>
    <name type="ORF">QtsA-16913</name>
    <name type="ORF">QtsA-18064</name>
</gene>
<name>UBP16_MACFA</name>
<feature type="chain" id="PRO_0000367502" description="Ubiquitin carboxyl-terminal hydrolase 16">
    <location>
        <begin position="1"/>
        <end position="826"/>
    </location>
</feature>
<feature type="domain" description="USP">
    <location>
        <begin position="196"/>
        <end position="825"/>
    </location>
</feature>
<feature type="zinc finger region" description="UBP-type" evidence="3">
    <location>
        <begin position="22"/>
        <end position="142"/>
    </location>
</feature>
<feature type="region of interest" description="Disordered" evidence="4">
    <location>
        <begin position="146"/>
        <end position="190"/>
    </location>
</feature>
<feature type="region of interest" description="Disordered" evidence="4">
    <location>
        <begin position="394"/>
        <end position="460"/>
    </location>
</feature>
<feature type="compositionally biased region" description="Basic and acidic residues" evidence="4">
    <location>
        <begin position="149"/>
        <end position="181"/>
    </location>
</feature>
<feature type="compositionally biased region" description="Basic and acidic residues" evidence="4">
    <location>
        <begin position="394"/>
        <end position="408"/>
    </location>
</feature>
<feature type="compositionally biased region" description="Acidic residues" evidence="4">
    <location>
        <begin position="409"/>
        <end position="420"/>
    </location>
</feature>
<feature type="compositionally biased region" description="Basic and acidic residues" evidence="4">
    <location>
        <begin position="421"/>
        <end position="430"/>
    </location>
</feature>
<feature type="compositionally biased region" description="Basic residues" evidence="4">
    <location>
        <begin position="438"/>
        <end position="458"/>
    </location>
</feature>
<feature type="active site" description="Nucleophile" evidence="2">
    <location>
        <position position="205"/>
    </location>
</feature>
<feature type="active site" description="Proton acceptor" evidence="2">
    <location>
        <position position="761"/>
    </location>
</feature>
<feature type="binding site" evidence="3">
    <location>
        <position position="24"/>
    </location>
    <ligand>
        <name>Zn(2+)</name>
        <dbReference type="ChEBI" id="CHEBI:29105"/>
        <label>1</label>
    </ligand>
</feature>
<feature type="binding site" evidence="3">
    <location>
        <position position="26"/>
    </location>
    <ligand>
        <name>Zn(2+)</name>
        <dbReference type="ChEBI" id="CHEBI:29105"/>
        <label>1</label>
    </ligand>
</feature>
<feature type="binding site" evidence="3">
    <location>
        <position position="48"/>
    </location>
    <ligand>
        <name>Zn(2+)</name>
        <dbReference type="ChEBI" id="CHEBI:29105"/>
        <label>2</label>
    </ligand>
</feature>
<feature type="binding site" evidence="3">
    <location>
        <position position="51"/>
    </location>
    <ligand>
        <name>Zn(2+)</name>
        <dbReference type="ChEBI" id="CHEBI:29105"/>
        <label>2</label>
    </ligand>
</feature>
<feature type="binding site" evidence="3">
    <location>
        <position position="74"/>
    </location>
    <ligand>
        <name>Zn(2+)</name>
        <dbReference type="ChEBI" id="CHEBI:29105"/>
        <label>3</label>
    </ligand>
</feature>
<feature type="binding site" evidence="3">
    <location>
        <position position="77"/>
    </location>
    <ligand>
        <name>Zn(2+)</name>
        <dbReference type="ChEBI" id="CHEBI:29105"/>
        <label>3</label>
    </ligand>
</feature>
<feature type="binding site" evidence="3">
    <location>
        <position position="82"/>
    </location>
    <ligand>
        <name>Zn(2+)</name>
        <dbReference type="ChEBI" id="CHEBI:29105"/>
        <label>2</label>
    </ligand>
</feature>
<feature type="binding site" evidence="3">
    <location>
        <position position="90"/>
    </location>
    <ligand>
        <name>Zn(2+)</name>
        <dbReference type="ChEBI" id="CHEBI:29105"/>
        <label>2</label>
    </ligand>
</feature>
<feature type="binding site" evidence="3">
    <location>
        <position position="94"/>
    </location>
    <ligand>
        <name>Zn(2+)</name>
        <dbReference type="ChEBI" id="CHEBI:29105"/>
        <label>3</label>
    </ligand>
</feature>
<feature type="binding site" evidence="3">
    <location>
        <position position="103"/>
    </location>
    <ligand>
        <name>Zn(2+)</name>
        <dbReference type="ChEBI" id="CHEBI:29105"/>
        <label>3</label>
    </ligand>
</feature>
<feature type="binding site" evidence="3">
    <location>
        <position position="116"/>
    </location>
    <ligand>
        <name>Zn(2+)</name>
        <dbReference type="ChEBI" id="CHEBI:29105"/>
        <label>1</label>
    </ligand>
</feature>
<feature type="binding site" evidence="3">
    <location>
        <position position="119"/>
    </location>
    <ligand>
        <name>Zn(2+)</name>
        <dbReference type="ChEBI" id="CHEBI:29105"/>
        <label>1</label>
    </ligand>
</feature>
<feature type="modified residue" description="Phosphoserine" evidence="1">
    <location>
        <position position="189"/>
    </location>
</feature>
<feature type="modified residue" description="Phosphoserine" evidence="1">
    <location>
        <position position="415"/>
    </location>
</feature>
<feature type="modified residue" description="Phosphoserine" evidence="1">
    <location>
        <position position="552"/>
    </location>
</feature>
<feature type="modified residue" description="Phosphothreonine" evidence="1">
    <location>
        <position position="557"/>
    </location>
</feature>
<feature type="cross-link" description="Glycyl lysine isopeptide (Lys-Gly) (interchain with G-Cter in SUMO2)" evidence="1">
    <location>
        <position position="140"/>
    </location>
</feature>
<feature type="splice variant" id="VSP_036723" description="In isoform 2." evidence="5">
    <location>
        <position position="150"/>
    </location>
</feature>
<feature type="splice variant" id="VSP_036724" description="In isoform 2." evidence="5">
    <original>NVAEENTRVLYSLYGVVEHSGTMRSGHYTAYAKARTANSHLSNLVLHGDIPQDFEMESKGQWFHISDTHVQAVPTTKVLNSQAYLLFYERIL</original>
    <variation>ILKWNQKGSGFTSATHMCKLCLQLKY</variation>
    <location>
        <begin position="735"/>
        <end position="826"/>
    </location>
</feature>
<feature type="sequence conflict" description="In Ref. 1; BAE01308." evidence="6" ref="1">
    <original>N</original>
    <variation>D</variation>
    <location>
        <position position="55"/>
    </location>
</feature>
<feature type="sequence conflict" description="In Ref. 1; BAE01308." evidence="6" ref="1">
    <original>S</original>
    <variation>P</variation>
    <location>
        <position position="128"/>
    </location>
</feature>
<feature type="sequence conflict" description="In Ref. 1; BAE01308." evidence="6" ref="1">
    <original>D</original>
    <variation>E</variation>
    <location>
        <position position="136"/>
    </location>
</feature>
<feature type="sequence conflict" description="In Ref. 1; BAE01147." evidence="6" ref="1">
    <original>S</original>
    <variation>G</variation>
    <location>
        <position position="143"/>
    </location>
</feature>
<feature type="sequence conflict" description="In Ref. 1; BAE01308." evidence="6" ref="1">
    <original>N</original>
    <variation>D</variation>
    <location>
        <position position="208"/>
    </location>
</feature>
<feature type="sequence conflict" description="In Ref. 1; BAE01147." evidence="6" ref="1">
    <original>P</original>
    <variation>S</variation>
    <location>
        <position position="531"/>
    </location>
</feature>
<sequence>MGKKRTKGKTVPIDDSSETLEPMCRHIRKGLEQGNLKKALVNVEWNICQDCKTDNKVKDKAEEETEEKPSVWLCLKCGHQGCGRNSQEQHALKHYLTPRSEPHCLVLSLDNWSVWCYICDNEVQYCSSNQLGQVVDYVRKQASITTPKPAEKDNGNIELENKKLEKESKNEQEREKKENMAKENPPMNSPSQITVKGLSNLGNTCFFNAVMQNLSQTPVLRELLKEVKMSGTIVKIEPPDLALTEPLEINLEPPGPLTLAMSQFLNEMQETKKGIVTPKELFSQVCKKAVRFKGYQQQDSQELLRYLLDGMRAEEHQRVSKGILKAFGNSTEKLDEELKNKVKDYEKKKSIPSFVDRIFGGELTSTIMCDQCRTVSLVHESFLDLSLPVLDDQSGKKSVNDKNLKKTMEDEDQDSEEEKDNDSYIKERSDIPSGTSKHLQKKAKKQAKKQAKNQRRQQKIQGKVLHLNDICTIDHPEDNEYEAEMSLQGEVNIKSNHISQEGVMHKEYCVNQKDLNGQEKMIESVTDNQKPTEEVDMKNINMDNDLEVLTSSPTECTRNLNGAYLTEASNGEVDISNGFKNLNLNAALHPDEINIEILNDSHTPGTKVYEVVNEDPETAFCTLANREVFNTDECSIQHCLYQFTRNEKLRDANKLLCEVCTRRQCNGPKANMKGERKHVYTNAKKQMLISLAPPVLTLHLKRFQQAGFNLRKVNKHIKFPEILDLAPFCTLKCKNVAEENTRVLYSLYGVVEHSGTMRSGHYTAYAKARTANSHLSNLVLHGDIPQDFEMESKGQWFHISDTHVQAVPTTKVLNSQAYLLFYERIL</sequence>
<accession>Q4R6X7</accession>
<accession>Q4R6G7</accession>
<comment type="function">
    <text evidence="2">Specifically deubiquitinates 'Lys-120' of histone H2A (H2AK119Ub), a specific tag for epigenetic transcriptional repression, thereby acting as a coactivator. Deubiquitination of histone H2A is a prerequisite for subsequent phosphorylation at 'Ser-11' of histone H3 (H3S10ph), and is required for chromosome segregation when cells enter into mitosis. In resting B- and T-lymphocytes, phosphorylation by AURKB leads to enhance its activity, thereby maintaining transcription in resting lymphocytes. Regulates Hox gene expression via histone H2A deubiquitination. Prefers nucleosomal substrates. Does not deubiquitinate histone H2B. Also deubiquitinates non-histone proteins, such as ribosomal protein RPS27A: deubiquitination of monoubiquitinated RPS27A promotes maturation of the 40S ribosomal subunit. Also mediates deubiquitination of tektin proteins (TEKT1, TEKT2, TEK3, TEKT4 and TEKT5), promoting their stability.</text>
</comment>
<comment type="catalytic activity">
    <reaction evidence="2">
        <text>Thiol-dependent hydrolysis of ester, thioester, amide, peptide and isopeptide bonds formed by the C-terminal Gly of ubiquitin (a 76-residue protein attached to proteins as an intracellular targeting signal).</text>
        <dbReference type="EC" id="3.4.19.12"/>
    </reaction>
</comment>
<comment type="subunit">
    <text evidence="2">Homotetramer. Associates with late pre-40S ribosomes. Interacts with CEP78; promoting deubiquitination of tektins.</text>
</comment>
<comment type="subcellular location">
    <subcellularLocation>
        <location evidence="2">Nucleus</location>
    </subcellularLocation>
</comment>
<comment type="alternative products">
    <event type="alternative splicing"/>
    <isoform>
        <id>Q4R6X7-1</id>
        <name>1</name>
        <sequence type="displayed"/>
    </isoform>
    <isoform>
        <id>Q4R6X7-2</id>
        <name>2</name>
        <sequence type="described" ref="VSP_036723 VSP_036724"/>
    </isoform>
</comment>
<comment type="domain">
    <text evidence="2">The UBP-type zinc finger binds 3 zinc ions that form a pair of cross-braced ring fingers encapsulated within a third zinc finger in the primary structure. It recognizes the C-terminal tail of free ubiquitin.</text>
</comment>
<comment type="PTM">
    <text evidence="2">Phosphorylated at the onset of mitosis and dephosphorylated during the metaphase/anaphase transition. Phosphorylation by AURKB enhances the deubiquitinase activity.</text>
</comment>
<comment type="similarity">
    <text evidence="2">Belongs to the peptidase C19 family. USP16 subfamily.</text>
</comment>
<comment type="sequence caution" evidence="6">
    <conflict type="frameshift">
        <sequence resource="EMBL-CDS" id="BAE01308"/>
    </conflict>
</comment>